<accession>Q1IZ94</accession>
<evidence type="ECO:0000255" key="1">
    <source>
        <dbReference type="HAMAP-Rule" id="MF_00607"/>
    </source>
</evidence>
<organism>
    <name type="scientific">Deinococcus geothermalis (strain DSM 11300 / CIP 105573 / AG-3a)</name>
    <dbReference type="NCBI Taxonomy" id="319795"/>
    <lineage>
        <taxon>Bacteria</taxon>
        <taxon>Thermotogati</taxon>
        <taxon>Deinococcota</taxon>
        <taxon>Deinococci</taxon>
        <taxon>Deinococcales</taxon>
        <taxon>Deinococcaceae</taxon>
        <taxon>Deinococcus</taxon>
    </lineage>
</organism>
<dbReference type="EC" id="2.1.1.182" evidence="1"/>
<dbReference type="EMBL" id="CP000359">
    <property type="protein sequence ID" value="ABF45440.1"/>
    <property type="molecule type" value="Genomic_DNA"/>
</dbReference>
<dbReference type="RefSeq" id="WP_011530277.1">
    <property type="nucleotide sequence ID" value="NC_008025.1"/>
</dbReference>
<dbReference type="SMR" id="Q1IZ94"/>
<dbReference type="STRING" id="319795.Dgeo_1143"/>
<dbReference type="KEGG" id="dge:Dgeo_1143"/>
<dbReference type="eggNOG" id="COG0030">
    <property type="taxonomic scope" value="Bacteria"/>
</dbReference>
<dbReference type="HOGENOM" id="CLU_041220_0_0_0"/>
<dbReference type="Proteomes" id="UP000002431">
    <property type="component" value="Chromosome"/>
</dbReference>
<dbReference type="GO" id="GO:0005829">
    <property type="term" value="C:cytosol"/>
    <property type="evidence" value="ECO:0007669"/>
    <property type="project" value="TreeGrafter"/>
</dbReference>
<dbReference type="GO" id="GO:0052908">
    <property type="term" value="F:16S rRNA (adenine(1518)-N(6)/adenine(1519)-N(6))-dimethyltransferase activity"/>
    <property type="evidence" value="ECO:0007669"/>
    <property type="project" value="UniProtKB-EC"/>
</dbReference>
<dbReference type="GO" id="GO:0003723">
    <property type="term" value="F:RNA binding"/>
    <property type="evidence" value="ECO:0007669"/>
    <property type="project" value="UniProtKB-KW"/>
</dbReference>
<dbReference type="CDD" id="cd02440">
    <property type="entry name" value="AdoMet_MTases"/>
    <property type="match status" value="1"/>
</dbReference>
<dbReference type="FunFam" id="3.40.50.150:FF:000023">
    <property type="entry name" value="Ribosomal RNA small subunit methyltransferase A"/>
    <property type="match status" value="1"/>
</dbReference>
<dbReference type="Gene3D" id="1.10.8.100">
    <property type="entry name" value="Ribosomal RNA adenine dimethylase-like, domain 2"/>
    <property type="match status" value="1"/>
</dbReference>
<dbReference type="Gene3D" id="3.40.50.150">
    <property type="entry name" value="Vaccinia Virus protein VP39"/>
    <property type="match status" value="1"/>
</dbReference>
<dbReference type="HAMAP" id="MF_00607">
    <property type="entry name" value="16SrRNA_methyltr_A"/>
    <property type="match status" value="1"/>
</dbReference>
<dbReference type="InterPro" id="IPR001737">
    <property type="entry name" value="KsgA/Erm"/>
</dbReference>
<dbReference type="InterPro" id="IPR023165">
    <property type="entry name" value="rRNA_Ade_diMease-like_C"/>
</dbReference>
<dbReference type="InterPro" id="IPR020596">
    <property type="entry name" value="rRNA_Ade_Mease_Trfase_CS"/>
</dbReference>
<dbReference type="InterPro" id="IPR020598">
    <property type="entry name" value="rRNA_Ade_methylase_Trfase_N"/>
</dbReference>
<dbReference type="InterPro" id="IPR011530">
    <property type="entry name" value="rRNA_adenine_dimethylase"/>
</dbReference>
<dbReference type="InterPro" id="IPR029063">
    <property type="entry name" value="SAM-dependent_MTases_sf"/>
</dbReference>
<dbReference type="NCBIfam" id="TIGR00755">
    <property type="entry name" value="ksgA"/>
    <property type="match status" value="1"/>
</dbReference>
<dbReference type="PANTHER" id="PTHR11727">
    <property type="entry name" value="DIMETHYLADENOSINE TRANSFERASE"/>
    <property type="match status" value="1"/>
</dbReference>
<dbReference type="PANTHER" id="PTHR11727:SF7">
    <property type="entry name" value="DIMETHYLADENOSINE TRANSFERASE-RELATED"/>
    <property type="match status" value="1"/>
</dbReference>
<dbReference type="Pfam" id="PF00398">
    <property type="entry name" value="RrnaAD"/>
    <property type="match status" value="1"/>
</dbReference>
<dbReference type="SMART" id="SM00650">
    <property type="entry name" value="rADc"/>
    <property type="match status" value="1"/>
</dbReference>
<dbReference type="SUPFAM" id="SSF53335">
    <property type="entry name" value="S-adenosyl-L-methionine-dependent methyltransferases"/>
    <property type="match status" value="1"/>
</dbReference>
<dbReference type="PROSITE" id="PS01131">
    <property type="entry name" value="RRNA_A_DIMETH"/>
    <property type="match status" value="1"/>
</dbReference>
<dbReference type="PROSITE" id="PS51689">
    <property type="entry name" value="SAM_RNA_A_N6_MT"/>
    <property type="match status" value="1"/>
</dbReference>
<keyword id="KW-0963">Cytoplasm</keyword>
<keyword id="KW-0489">Methyltransferase</keyword>
<keyword id="KW-0694">RNA-binding</keyword>
<keyword id="KW-0698">rRNA processing</keyword>
<keyword id="KW-0949">S-adenosyl-L-methionine</keyword>
<keyword id="KW-0808">Transferase</keyword>
<sequence>MTQSEPPSLPLYSPARVRDLLTRHGLRPTKSLGQNFLIDGNILRAIAQAGGAAPGVPVLEVGPGLGVLTRELAARGAHVTALEKDERLRPVLAETLAGQDVQVVWGDALEFDYASLPAGTRVIANLPYYITGPLLARFMQAPGIISATVLVQKEVAGRLAARPGEDNYGFLSALAALYGTVQHVRDVPKGAFLPAPDVTSSVVRLDFDRARPAPEPAFLKFVEAALHHRRKTLRNNLRLAGFGGEAVGEALMAAGLRPDVRAEDVPLEDLRVLARRLGVLR</sequence>
<reference key="1">
    <citation type="submission" date="2006-04" db="EMBL/GenBank/DDBJ databases">
        <title>Complete sequence of chromosome of Deinococcus geothermalis DSM 11300.</title>
        <authorList>
            <person name="Copeland A."/>
            <person name="Lucas S."/>
            <person name="Lapidus A."/>
            <person name="Barry K."/>
            <person name="Detter J.C."/>
            <person name="Glavina del Rio T."/>
            <person name="Hammon N."/>
            <person name="Israni S."/>
            <person name="Dalin E."/>
            <person name="Tice H."/>
            <person name="Pitluck S."/>
            <person name="Brettin T."/>
            <person name="Bruce D."/>
            <person name="Han C."/>
            <person name="Tapia R."/>
            <person name="Saunders E."/>
            <person name="Gilna P."/>
            <person name="Schmutz J."/>
            <person name="Larimer F."/>
            <person name="Land M."/>
            <person name="Hauser L."/>
            <person name="Kyrpides N."/>
            <person name="Kim E."/>
            <person name="Daly M.J."/>
            <person name="Fredrickson J.K."/>
            <person name="Makarova K.S."/>
            <person name="Gaidamakova E.K."/>
            <person name="Zhai M."/>
            <person name="Richardson P."/>
        </authorList>
    </citation>
    <scope>NUCLEOTIDE SEQUENCE [LARGE SCALE GENOMIC DNA]</scope>
    <source>
        <strain>DSM 11300 / CIP 105573 / AG-3a</strain>
    </source>
</reference>
<gene>
    <name evidence="1" type="primary">rsmA</name>
    <name evidence="1" type="synonym">ksgA</name>
    <name type="ordered locus">Dgeo_1143</name>
</gene>
<proteinExistence type="inferred from homology"/>
<name>RSMA_DEIGD</name>
<comment type="function">
    <text evidence="1">Specifically dimethylates two adjacent adenosines (A1518 and A1519) in the loop of a conserved hairpin near the 3'-end of 16S rRNA in the 30S particle. May play a critical role in biogenesis of 30S subunits.</text>
</comment>
<comment type="catalytic activity">
    <reaction evidence="1">
        <text>adenosine(1518)/adenosine(1519) in 16S rRNA + 4 S-adenosyl-L-methionine = N(6)-dimethyladenosine(1518)/N(6)-dimethyladenosine(1519) in 16S rRNA + 4 S-adenosyl-L-homocysteine + 4 H(+)</text>
        <dbReference type="Rhea" id="RHEA:19609"/>
        <dbReference type="Rhea" id="RHEA-COMP:10232"/>
        <dbReference type="Rhea" id="RHEA-COMP:10233"/>
        <dbReference type="ChEBI" id="CHEBI:15378"/>
        <dbReference type="ChEBI" id="CHEBI:57856"/>
        <dbReference type="ChEBI" id="CHEBI:59789"/>
        <dbReference type="ChEBI" id="CHEBI:74411"/>
        <dbReference type="ChEBI" id="CHEBI:74493"/>
        <dbReference type="EC" id="2.1.1.182"/>
    </reaction>
</comment>
<comment type="subcellular location">
    <subcellularLocation>
        <location evidence="1">Cytoplasm</location>
    </subcellularLocation>
</comment>
<comment type="similarity">
    <text evidence="1">Belongs to the class I-like SAM-binding methyltransferase superfamily. rRNA adenine N(6)-methyltransferase family. RsmA subfamily.</text>
</comment>
<feature type="chain" id="PRO_0000257283" description="Ribosomal RNA small subunit methyltransferase A">
    <location>
        <begin position="1"/>
        <end position="281"/>
    </location>
</feature>
<feature type="binding site" evidence="1">
    <location>
        <position position="35"/>
    </location>
    <ligand>
        <name>S-adenosyl-L-methionine</name>
        <dbReference type="ChEBI" id="CHEBI:59789"/>
    </ligand>
</feature>
<feature type="binding site" evidence="1">
    <location>
        <position position="37"/>
    </location>
    <ligand>
        <name>S-adenosyl-L-methionine</name>
        <dbReference type="ChEBI" id="CHEBI:59789"/>
    </ligand>
</feature>
<feature type="binding site" evidence="1">
    <location>
        <position position="62"/>
    </location>
    <ligand>
        <name>S-adenosyl-L-methionine</name>
        <dbReference type="ChEBI" id="CHEBI:59789"/>
    </ligand>
</feature>
<feature type="binding site" evidence="1">
    <location>
        <position position="83"/>
    </location>
    <ligand>
        <name>S-adenosyl-L-methionine</name>
        <dbReference type="ChEBI" id="CHEBI:59789"/>
    </ligand>
</feature>
<feature type="binding site" evidence="1">
    <location>
        <position position="107"/>
    </location>
    <ligand>
        <name>S-adenosyl-L-methionine</name>
        <dbReference type="ChEBI" id="CHEBI:59789"/>
    </ligand>
</feature>
<feature type="binding site" evidence="1">
    <location>
        <position position="125"/>
    </location>
    <ligand>
        <name>S-adenosyl-L-methionine</name>
        <dbReference type="ChEBI" id="CHEBI:59789"/>
    </ligand>
</feature>
<protein>
    <recommendedName>
        <fullName evidence="1">Ribosomal RNA small subunit methyltransferase A</fullName>
        <ecNumber evidence="1">2.1.1.182</ecNumber>
    </recommendedName>
    <alternativeName>
        <fullName evidence="1">16S rRNA (adenine(1518)-N(6)/adenine(1519)-N(6))-dimethyltransferase</fullName>
    </alternativeName>
    <alternativeName>
        <fullName evidence="1">16S rRNA dimethyladenosine transferase</fullName>
    </alternativeName>
    <alternativeName>
        <fullName evidence="1">16S rRNA dimethylase</fullName>
    </alternativeName>
    <alternativeName>
        <fullName evidence="1">S-adenosylmethionine-6-N', N'-adenosyl(rRNA) dimethyltransferase</fullName>
    </alternativeName>
</protein>